<organism>
    <name type="scientific">Lepidium virginicum</name>
    <name type="common">Virginia pepperweed</name>
    <dbReference type="NCBI Taxonomy" id="59292"/>
    <lineage>
        <taxon>Eukaryota</taxon>
        <taxon>Viridiplantae</taxon>
        <taxon>Streptophyta</taxon>
        <taxon>Embryophyta</taxon>
        <taxon>Tracheophyta</taxon>
        <taxon>Spermatophyta</taxon>
        <taxon>Magnoliopsida</taxon>
        <taxon>eudicotyledons</taxon>
        <taxon>Gunneridae</taxon>
        <taxon>Pentapetalae</taxon>
        <taxon>rosids</taxon>
        <taxon>malvids</taxon>
        <taxon>Brassicales</taxon>
        <taxon>Brassicaceae</taxon>
        <taxon>Lepidieae</taxon>
        <taxon>Lepidium</taxon>
    </lineage>
</organism>
<keyword id="KW-0150">Chloroplast</keyword>
<keyword id="KW-0934">Plastid</keyword>
<keyword id="KW-0687">Ribonucleoprotein</keyword>
<keyword id="KW-0689">Ribosomal protein</keyword>
<evidence type="ECO:0000305" key="1"/>
<feature type="chain" id="PRO_0000352126" description="Small ribosomal subunit protein uS2c">
    <location>
        <begin position="1"/>
        <end position="236"/>
    </location>
</feature>
<sequence length="236" mass="26857">MTKRYWNIDLEEMMRAGVHFGHGTRKWNPRMAPYISAKRKGIHIINLTRTARFLSEACDLVFDAASRGKQFLIVGTKNKAADLVSRAAIRARCHYVNKKWLGGMLTNWSTTEKRLHKFRDLRTEQKTEGFNRLPKRDAAVLKRQLSRLKTYLGGIKYMTGLPDIVIIIDQQEEYTALRECITLGIPTISLIDTNCNPDLADISIPANDDAIASIRFILNKLVFAIGEGRSSYIQNS</sequence>
<name>RR2_LEPVR</name>
<protein>
    <recommendedName>
        <fullName evidence="1">Small ribosomal subunit protein uS2c</fullName>
    </recommendedName>
    <alternativeName>
        <fullName>30S ribosomal protein S2, chloroplastic</fullName>
    </alternativeName>
</protein>
<comment type="subcellular location">
    <subcellularLocation>
        <location>Plastid</location>
        <location>Chloroplast</location>
    </subcellularLocation>
</comment>
<comment type="similarity">
    <text evidence="1">Belongs to the universal ribosomal protein uS2 family.</text>
</comment>
<gene>
    <name type="primary">rps2</name>
</gene>
<reference key="1">
    <citation type="submission" date="2007-03" db="EMBL/GenBank/DDBJ databases">
        <title>Sequencing analysis of Lepidium virginicum JO26 chloroplast DNA.</title>
        <authorList>
            <person name="Hosouchi T."/>
            <person name="Tsuruoka H."/>
            <person name="Kotani H."/>
        </authorList>
    </citation>
    <scope>NUCLEOTIDE SEQUENCE [LARGE SCALE GENOMIC DNA]</scope>
</reference>
<dbReference type="EMBL" id="AP009374">
    <property type="protein sequence ID" value="BAF50450.1"/>
    <property type="molecule type" value="Genomic_DNA"/>
</dbReference>
<dbReference type="RefSeq" id="YP_001123626.1">
    <property type="nucleotide sequence ID" value="NC_009273.1"/>
</dbReference>
<dbReference type="SMR" id="A4QL95"/>
<dbReference type="GeneID" id="4962035"/>
<dbReference type="GO" id="GO:0009507">
    <property type="term" value="C:chloroplast"/>
    <property type="evidence" value="ECO:0007669"/>
    <property type="project" value="UniProtKB-SubCell"/>
</dbReference>
<dbReference type="GO" id="GO:0005763">
    <property type="term" value="C:mitochondrial small ribosomal subunit"/>
    <property type="evidence" value="ECO:0007669"/>
    <property type="project" value="TreeGrafter"/>
</dbReference>
<dbReference type="GO" id="GO:0003735">
    <property type="term" value="F:structural constituent of ribosome"/>
    <property type="evidence" value="ECO:0007669"/>
    <property type="project" value="InterPro"/>
</dbReference>
<dbReference type="GO" id="GO:0006412">
    <property type="term" value="P:translation"/>
    <property type="evidence" value="ECO:0007669"/>
    <property type="project" value="UniProtKB-UniRule"/>
</dbReference>
<dbReference type="CDD" id="cd01425">
    <property type="entry name" value="RPS2"/>
    <property type="match status" value="1"/>
</dbReference>
<dbReference type="FunFam" id="3.40.50.10490:FF:000101">
    <property type="match status" value="1"/>
</dbReference>
<dbReference type="FunFam" id="1.10.287.610:FF:000001">
    <property type="entry name" value="30S ribosomal protein S2"/>
    <property type="match status" value="1"/>
</dbReference>
<dbReference type="Gene3D" id="3.40.50.10490">
    <property type="entry name" value="Glucose-6-phosphate isomerase like protein, domain 1"/>
    <property type="match status" value="1"/>
</dbReference>
<dbReference type="Gene3D" id="1.10.287.610">
    <property type="entry name" value="Helix hairpin bin"/>
    <property type="match status" value="1"/>
</dbReference>
<dbReference type="HAMAP" id="MF_00291_B">
    <property type="entry name" value="Ribosomal_uS2_B"/>
    <property type="match status" value="1"/>
</dbReference>
<dbReference type="InterPro" id="IPR001865">
    <property type="entry name" value="Ribosomal_uS2"/>
</dbReference>
<dbReference type="InterPro" id="IPR005706">
    <property type="entry name" value="Ribosomal_uS2_bac/mit/plastid"/>
</dbReference>
<dbReference type="InterPro" id="IPR018130">
    <property type="entry name" value="Ribosomal_uS2_CS"/>
</dbReference>
<dbReference type="InterPro" id="IPR023591">
    <property type="entry name" value="Ribosomal_uS2_flav_dom_sf"/>
</dbReference>
<dbReference type="NCBIfam" id="TIGR01011">
    <property type="entry name" value="rpsB_bact"/>
    <property type="match status" value="1"/>
</dbReference>
<dbReference type="PANTHER" id="PTHR12534">
    <property type="entry name" value="30S RIBOSOMAL PROTEIN S2 PROKARYOTIC AND ORGANELLAR"/>
    <property type="match status" value="1"/>
</dbReference>
<dbReference type="PANTHER" id="PTHR12534:SF0">
    <property type="entry name" value="SMALL RIBOSOMAL SUBUNIT PROTEIN US2M"/>
    <property type="match status" value="1"/>
</dbReference>
<dbReference type="Pfam" id="PF00318">
    <property type="entry name" value="Ribosomal_S2"/>
    <property type="match status" value="1"/>
</dbReference>
<dbReference type="PRINTS" id="PR00395">
    <property type="entry name" value="RIBOSOMALS2"/>
</dbReference>
<dbReference type="SUPFAM" id="SSF52313">
    <property type="entry name" value="Ribosomal protein S2"/>
    <property type="match status" value="1"/>
</dbReference>
<dbReference type="PROSITE" id="PS00962">
    <property type="entry name" value="RIBOSOMAL_S2_1"/>
    <property type="match status" value="1"/>
</dbReference>
<dbReference type="PROSITE" id="PS00963">
    <property type="entry name" value="RIBOSOMAL_S2_2"/>
    <property type="match status" value="1"/>
</dbReference>
<geneLocation type="chloroplast"/>
<accession>A4QL95</accession>
<proteinExistence type="inferred from homology"/>